<name>CH60_WOLSU</name>
<organism>
    <name type="scientific">Wolinella succinogenes (strain ATCC 29543 / DSM 1740 / CCUG 13145 / JCM 31913 / LMG 7466 / NCTC 11488 / FDC 602W)</name>
    <name type="common">Vibrio succinogenes</name>
    <dbReference type="NCBI Taxonomy" id="273121"/>
    <lineage>
        <taxon>Bacteria</taxon>
        <taxon>Pseudomonadati</taxon>
        <taxon>Campylobacterota</taxon>
        <taxon>Epsilonproteobacteria</taxon>
        <taxon>Campylobacterales</taxon>
        <taxon>Helicobacteraceae</taxon>
        <taxon>Wolinella</taxon>
    </lineage>
</organism>
<feature type="chain" id="PRO_0000063604" description="Chaperonin GroEL">
    <location>
        <begin position="1"/>
        <end position="546"/>
    </location>
</feature>
<feature type="binding site" evidence="1">
    <location>
        <begin position="30"/>
        <end position="33"/>
    </location>
    <ligand>
        <name>ATP</name>
        <dbReference type="ChEBI" id="CHEBI:30616"/>
    </ligand>
</feature>
<feature type="binding site" evidence="1">
    <location>
        <position position="51"/>
    </location>
    <ligand>
        <name>ATP</name>
        <dbReference type="ChEBI" id="CHEBI:30616"/>
    </ligand>
</feature>
<feature type="binding site" evidence="1">
    <location>
        <begin position="87"/>
        <end position="91"/>
    </location>
    <ligand>
        <name>ATP</name>
        <dbReference type="ChEBI" id="CHEBI:30616"/>
    </ligand>
</feature>
<feature type="binding site" evidence="1">
    <location>
        <position position="415"/>
    </location>
    <ligand>
        <name>ATP</name>
        <dbReference type="ChEBI" id="CHEBI:30616"/>
    </ligand>
</feature>
<feature type="binding site" evidence="1">
    <location>
        <begin position="478"/>
        <end position="480"/>
    </location>
    <ligand>
        <name>ATP</name>
        <dbReference type="ChEBI" id="CHEBI:30616"/>
    </ligand>
</feature>
<feature type="binding site" evidence="1">
    <location>
        <position position="494"/>
    </location>
    <ligand>
        <name>ATP</name>
        <dbReference type="ChEBI" id="CHEBI:30616"/>
    </ligand>
</feature>
<evidence type="ECO:0000255" key="1">
    <source>
        <dbReference type="HAMAP-Rule" id="MF_00600"/>
    </source>
</evidence>
<comment type="function">
    <text evidence="1">Together with its co-chaperonin GroES, plays an essential role in assisting protein folding. The GroEL-GroES system forms a nano-cage that allows encapsulation of the non-native substrate proteins and provides a physical environment optimized to promote and accelerate protein folding.</text>
</comment>
<comment type="catalytic activity">
    <reaction evidence="1">
        <text>ATP + H2O + a folded polypeptide = ADP + phosphate + an unfolded polypeptide.</text>
        <dbReference type="EC" id="5.6.1.7"/>
    </reaction>
</comment>
<comment type="subunit">
    <text evidence="1">Forms a cylinder of 14 subunits composed of two heptameric rings stacked back-to-back. Interacts with the co-chaperonin GroES.</text>
</comment>
<comment type="subcellular location">
    <subcellularLocation>
        <location evidence="1">Cytoplasm</location>
    </subcellularLocation>
</comment>
<comment type="similarity">
    <text evidence="1">Belongs to the chaperonin (HSP60) family.</text>
</comment>
<protein>
    <recommendedName>
        <fullName evidence="1">Chaperonin GroEL</fullName>
        <ecNumber evidence="1">5.6.1.7</ecNumber>
    </recommendedName>
    <alternativeName>
        <fullName evidence="1">60 kDa chaperonin</fullName>
    </alternativeName>
    <alternativeName>
        <fullName evidence="1">Chaperonin-60</fullName>
        <shortName evidence="1">Cpn60</shortName>
    </alternativeName>
</protein>
<gene>
    <name evidence="1" type="primary">groEL</name>
    <name evidence="1" type="synonym">groL</name>
    <name type="ordered locus">WS0308</name>
</gene>
<proteinExistence type="inferred from homology"/>
<reference key="1">
    <citation type="journal article" date="2003" name="Proc. Natl. Acad. Sci. U.S.A.">
        <title>Complete genome sequence and analysis of Wolinella succinogenes.</title>
        <authorList>
            <person name="Baar C."/>
            <person name="Eppinger M."/>
            <person name="Raddatz G."/>
            <person name="Simon J."/>
            <person name="Lanz C."/>
            <person name="Klimmek O."/>
            <person name="Nandakumar R."/>
            <person name="Gross R."/>
            <person name="Rosinus A."/>
            <person name="Keller H."/>
            <person name="Jagtap P."/>
            <person name="Linke B."/>
            <person name="Meyer F."/>
            <person name="Lederer H."/>
            <person name="Schuster S.C."/>
        </authorList>
    </citation>
    <scope>NUCLEOTIDE SEQUENCE [LARGE SCALE GENOMIC DNA]</scope>
    <source>
        <strain>ATCC 29543 / DSM 1740 / CCUG 13145 / JCM 31913 / LMG 7466 / NCTC 11488 / FDC 602W</strain>
    </source>
</reference>
<keyword id="KW-0067">ATP-binding</keyword>
<keyword id="KW-0143">Chaperone</keyword>
<keyword id="KW-0963">Cytoplasm</keyword>
<keyword id="KW-0413">Isomerase</keyword>
<keyword id="KW-0547">Nucleotide-binding</keyword>
<keyword id="KW-1185">Reference proteome</keyword>
<dbReference type="EC" id="5.6.1.7" evidence="1"/>
<dbReference type="EMBL" id="BX571657">
    <property type="protein sequence ID" value="CAE09459.1"/>
    <property type="molecule type" value="Genomic_DNA"/>
</dbReference>
<dbReference type="RefSeq" id="WP_011138260.1">
    <property type="nucleotide sequence ID" value="NC_005090.1"/>
</dbReference>
<dbReference type="SMR" id="Q7MAE3"/>
<dbReference type="STRING" id="273121.WS0308"/>
<dbReference type="KEGG" id="wsu:WS0308"/>
<dbReference type="eggNOG" id="COG0459">
    <property type="taxonomic scope" value="Bacteria"/>
</dbReference>
<dbReference type="HOGENOM" id="CLU_016503_3_0_7"/>
<dbReference type="Proteomes" id="UP000000422">
    <property type="component" value="Chromosome"/>
</dbReference>
<dbReference type="GO" id="GO:0005737">
    <property type="term" value="C:cytoplasm"/>
    <property type="evidence" value="ECO:0007669"/>
    <property type="project" value="UniProtKB-SubCell"/>
</dbReference>
<dbReference type="GO" id="GO:0005524">
    <property type="term" value="F:ATP binding"/>
    <property type="evidence" value="ECO:0007669"/>
    <property type="project" value="UniProtKB-UniRule"/>
</dbReference>
<dbReference type="GO" id="GO:0140662">
    <property type="term" value="F:ATP-dependent protein folding chaperone"/>
    <property type="evidence" value="ECO:0007669"/>
    <property type="project" value="InterPro"/>
</dbReference>
<dbReference type="GO" id="GO:0016853">
    <property type="term" value="F:isomerase activity"/>
    <property type="evidence" value="ECO:0007669"/>
    <property type="project" value="UniProtKB-KW"/>
</dbReference>
<dbReference type="GO" id="GO:0051082">
    <property type="term" value="F:unfolded protein binding"/>
    <property type="evidence" value="ECO:0007669"/>
    <property type="project" value="UniProtKB-UniRule"/>
</dbReference>
<dbReference type="GO" id="GO:0042026">
    <property type="term" value="P:protein refolding"/>
    <property type="evidence" value="ECO:0007669"/>
    <property type="project" value="UniProtKB-UniRule"/>
</dbReference>
<dbReference type="CDD" id="cd03344">
    <property type="entry name" value="GroEL"/>
    <property type="match status" value="1"/>
</dbReference>
<dbReference type="FunFam" id="3.50.7.10:FF:000001">
    <property type="entry name" value="60 kDa chaperonin"/>
    <property type="match status" value="1"/>
</dbReference>
<dbReference type="Gene3D" id="3.50.7.10">
    <property type="entry name" value="GroEL"/>
    <property type="match status" value="1"/>
</dbReference>
<dbReference type="Gene3D" id="1.10.560.10">
    <property type="entry name" value="GroEL-like equatorial domain"/>
    <property type="match status" value="1"/>
</dbReference>
<dbReference type="Gene3D" id="3.30.260.10">
    <property type="entry name" value="TCP-1-like chaperonin intermediate domain"/>
    <property type="match status" value="1"/>
</dbReference>
<dbReference type="HAMAP" id="MF_00600">
    <property type="entry name" value="CH60"/>
    <property type="match status" value="1"/>
</dbReference>
<dbReference type="InterPro" id="IPR018370">
    <property type="entry name" value="Chaperonin_Cpn60_CS"/>
</dbReference>
<dbReference type="InterPro" id="IPR001844">
    <property type="entry name" value="Cpn60/GroEL"/>
</dbReference>
<dbReference type="InterPro" id="IPR002423">
    <property type="entry name" value="Cpn60/GroEL/TCP-1"/>
</dbReference>
<dbReference type="InterPro" id="IPR027409">
    <property type="entry name" value="GroEL-like_apical_dom_sf"/>
</dbReference>
<dbReference type="InterPro" id="IPR027413">
    <property type="entry name" value="GROEL-like_equatorial_sf"/>
</dbReference>
<dbReference type="InterPro" id="IPR027410">
    <property type="entry name" value="TCP-1-like_intermed_sf"/>
</dbReference>
<dbReference type="NCBIfam" id="TIGR02348">
    <property type="entry name" value="GroEL"/>
    <property type="match status" value="1"/>
</dbReference>
<dbReference type="NCBIfam" id="NF000592">
    <property type="entry name" value="PRK00013.1"/>
    <property type="match status" value="1"/>
</dbReference>
<dbReference type="NCBIfam" id="NF009487">
    <property type="entry name" value="PRK12849.1"/>
    <property type="match status" value="1"/>
</dbReference>
<dbReference type="NCBIfam" id="NF009488">
    <property type="entry name" value="PRK12850.1"/>
    <property type="match status" value="1"/>
</dbReference>
<dbReference type="NCBIfam" id="NF009489">
    <property type="entry name" value="PRK12851.1"/>
    <property type="match status" value="1"/>
</dbReference>
<dbReference type="PANTHER" id="PTHR45633">
    <property type="entry name" value="60 KDA HEAT SHOCK PROTEIN, MITOCHONDRIAL"/>
    <property type="match status" value="1"/>
</dbReference>
<dbReference type="Pfam" id="PF00118">
    <property type="entry name" value="Cpn60_TCP1"/>
    <property type="match status" value="1"/>
</dbReference>
<dbReference type="PRINTS" id="PR00298">
    <property type="entry name" value="CHAPERONIN60"/>
</dbReference>
<dbReference type="SUPFAM" id="SSF52029">
    <property type="entry name" value="GroEL apical domain-like"/>
    <property type="match status" value="1"/>
</dbReference>
<dbReference type="SUPFAM" id="SSF48592">
    <property type="entry name" value="GroEL equatorial domain-like"/>
    <property type="match status" value="1"/>
</dbReference>
<dbReference type="SUPFAM" id="SSF54849">
    <property type="entry name" value="GroEL-intermediate domain like"/>
    <property type="match status" value="1"/>
</dbReference>
<dbReference type="PROSITE" id="PS00296">
    <property type="entry name" value="CHAPERONINS_CPN60"/>
    <property type="match status" value="1"/>
</dbReference>
<sequence>MASKEINFSDSARNKLYEGVRQLADAVKVTMGPRGRNVLIQKSFGAPSITKDGVSVAKEIELADAISNMGAQLVKEVASKTADAAGDGTTTATVLAHGIFKEGLRNITAGANPIEVKRGMDKATAAIIDELKKLSKKVNDKKEIAQVATISANSDENIGSLIAEAMEKVGKDGVITVEEAKGINDELNVVEGMQFDRGYLSPYFVTNSDKMEAVLENPYILLTDKKITSMKDILPLLEGTMKSGRPLLIVAEDIEGEALTTLVVNKLRGVLNVAAVKAPGFGDRRKEMLKDIATLTGGSVISEEIGKTLESATIADLGQAARVVIDKDNSTIVDGKGSKDEVNARVAQIRTQIEATTSDYDREKLQERLAKLSGGVAVIKVGAASEVEMKEKKDRVDDALSATKAAVEEGIVIGGGAALIRAAAKVKLELSGDEKIGYEIIKRAISAPLKQIAQNAGFDAGVVANNVEQNGNENFGFNAANGEYVDMFAEGIIDPLKVARIALQNAVSVSSLLLTTEATISEIKEDKPAMPDMSGMGGMGGMGGMM</sequence>
<accession>Q7MAE3</accession>